<evidence type="ECO:0000255" key="1"/>
<evidence type="ECO:0000305" key="2"/>
<keyword id="KW-0472">Membrane</keyword>
<keyword id="KW-0812">Transmembrane</keyword>
<keyword id="KW-1133">Transmembrane helix</keyword>
<protein>
    <recommendedName>
        <fullName>Putative polysaccharide ligase RF_0568</fullName>
    </recommendedName>
</protein>
<feature type="chain" id="PRO_0000280991" description="Putative polysaccharide ligase RF_0568">
    <location>
        <begin position="1"/>
        <end position="407"/>
    </location>
</feature>
<feature type="transmembrane region" description="Helical" evidence="1">
    <location>
        <begin position="15"/>
        <end position="35"/>
    </location>
</feature>
<feature type="transmembrane region" description="Helical" evidence="1">
    <location>
        <begin position="71"/>
        <end position="91"/>
    </location>
</feature>
<feature type="transmembrane region" description="Helical" evidence="1">
    <location>
        <begin position="100"/>
        <end position="120"/>
    </location>
</feature>
<feature type="transmembrane region" description="Helical" evidence="1">
    <location>
        <begin position="129"/>
        <end position="149"/>
    </location>
</feature>
<feature type="transmembrane region" description="Helical" evidence="1">
    <location>
        <begin position="166"/>
        <end position="186"/>
    </location>
</feature>
<feature type="transmembrane region" description="Helical" evidence="1">
    <location>
        <begin position="203"/>
        <end position="223"/>
    </location>
</feature>
<feature type="transmembrane region" description="Helical" evidence="1">
    <location>
        <begin position="229"/>
        <end position="249"/>
    </location>
</feature>
<feature type="transmembrane region" description="Helical" evidence="1">
    <location>
        <begin position="272"/>
        <end position="292"/>
    </location>
</feature>
<feature type="transmembrane region" description="Helical" evidence="1">
    <location>
        <begin position="324"/>
        <end position="344"/>
    </location>
</feature>
<feature type="transmembrane region" description="Helical" evidence="1">
    <location>
        <begin position="379"/>
        <end position="399"/>
    </location>
</feature>
<proteinExistence type="inferred from homology"/>
<dbReference type="EMBL" id="CP000053">
    <property type="protein sequence ID" value="AAY61419.1"/>
    <property type="molecule type" value="Genomic_DNA"/>
</dbReference>
<dbReference type="STRING" id="315456.RF_0568"/>
<dbReference type="KEGG" id="rfe:RF_0568"/>
<dbReference type="eggNOG" id="COG3307">
    <property type="taxonomic scope" value="Bacteria"/>
</dbReference>
<dbReference type="HOGENOM" id="CLU_668825_0_0_5"/>
<dbReference type="OrthoDB" id="8050531at2"/>
<dbReference type="Proteomes" id="UP000008548">
    <property type="component" value="Chromosome"/>
</dbReference>
<dbReference type="GO" id="GO:0016020">
    <property type="term" value="C:membrane"/>
    <property type="evidence" value="ECO:0007669"/>
    <property type="project" value="UniProtKB-SubCell"/>
</dbReference>
<dbReference type="InterPro" id="IPR007016">
    <property type="entry name" value="O-antigen_ligase-rel_domated"/>
</dbReference>
<dbReference type="InterPro" id="IPR051533">
    <property type="entry name" value="WaaL-like"/>
</dbReference>
<dbReference type="PANTHER" id="PTHR37422:SF13">
    <property type="entry name" value="LIPOPOLYSACCHARIDE BIOSYNTHESIS PROTEIN PA4999-RELATED"/>
    <property type="match status" value="1"/>
</dbReference>
<dbReference type="PANTHER" id="PTHR37422">
    <property type="entry name" value="TEICHURONIC ACID BIOSYNTHESIS PROTEIN TUAE"/>
    <property type="match status" value="1"/>
</dbReference>
<dbReference type="Pfam" id="PF04932">
    <property type="entry name" value="Wzy_C"/>
    <property type="match status" value="1"/>
</dbReference>
<sequence>MQYLISSLIFLIPSLGMVAGLSVAATVTIFLLMLFLRGINRHCERLKGAWQSHKAGLLRLLRQNLQFFLAMTIKTELLFTAWCFISCLFAIRPINSLATFIQVFILLFLGFTVSNCVPFGNRVQLKNSLILGILTAILLFFIEYSSHGFLTRTFKASFGLYMLDRGCALLSITSWVAIIILLSSGKRRHALMLYILVLYLLSISDSLASFLGFSIGGVIFILARLIKPIFFKLIAISLITGSLLFPVIAKQIEPRDLSEKYLATQPSAAHRLFIWHFVANKITLKPILGYGFASSKYIKVNNSEMINYNGEKWHPLPLHPHNNILQITLELGIIGLILFLCLVYKYLKQINNIKSSNFRAASYSCFINYYIIGMISYNIWQIWWISSGIWVLVLMKLLVKPDIVVDN</sequence>
<organism>
    <name type="scientific">Rickettsia felis (strain ATCC VR-1525 / URRWXCal2)</name>
    <name type="common">Rickettsia azadi</name>
    <dbReference type="NCBI Taxonomy" id="315456"/>
    <lineage>
        <taxon>Bacteria</taxon>
        <taxon>Pseudomonadati</taxon>
        <taxon>Pseudomonadota</taxon>
        <taxon>Alphaproteobacteria</taxon>
        <taxon>Rickettsiales</taxon>
        <taxon>Rickettsiaceae</taxon>
        <taxon>Rickettsieae</taxon>
        <taxon>Rickettsia</taxon>
        <taxon>spotted fever group</taxon>
    </lineage>
</organism>
<reference key="1">
    <citation type="journal article" date="2005" name="PLoS Biol.">
        <title>The genome sequence of Rickettsia felis identifies the first putative conjugative plasmid in an obligate intracellular parasite.</title>
        <authorList>
            <person name="Ogata H."/>
            <person name="Renesto P."/>
            <person name="Audic S."/>
            <person name="Robert C."/>
            <person name="Blanc G."/>
            <person name="Fournier P.-E."/>
            <person name="Parinello H."/>
            <person name="Claverie J.-M."/>
            <person name="Raoult D."/>
        </authorList>
    </citation>
    <scope>NUCLEOTIDE SEQUENCE [LARGE SCALE GENOMIC DNA]</scope>
    <source>
        <strain>ATCC VR-1525 / URRWXCal2</strain>
    </source>
</reference>
<name>Y568_RICFE</name>
<accession>Q4UM04</accession>
<comment type="subcellular location">
    <subcellularLocation>
        <location evidence="2">Membrane</location>
        <topology evidence="2">Multi-pass membrane protein</topology>
    </subcellularLocation>
</comment>
<comment type="similarity">
    <text evidence="2">Belongs to the O-antigen ligase family.</text>
</comment>
<gene>
    <name type="ordered locus">RF_0568</name>
</gene>